<keyword id="KW-0687">Ribonucleoprotein</keyword>
<keyword id="KW-0689">Ribosomal protein</keyword>
<sequence>MKTYSAKPSEIEKKWWVIDAKNIVLGRLASRVANMLRGKHKPSFTPHLDCGDNIIIINAEHVKLTGKKANPKDGKIYYRYTGFPGGIKDTTAGKILSGKHPERVIKMAVKRMITRNALGAKQMSNLYVYANGDHPHMAQQPTVYDFASQNPKNKK</sequence>
<organism>
    <name type="scientific">Rickettsia conorii (strain ATCC VR-613 / Malish 7)</name>
    <dbReference type="NCBI Taxonomy" id="272944"/>
    <lineage>
        <taxon>Bacteria</taxon>
        <taxon>Pseudomonadati</taxon>
        <taxon>Pseudomonadota</taxon>
        <taxon>Alphaproteobacteria</taxon>
        <taxon>Rickettsiales</taxon>
        <taxon>Rickettsiaceae</taxon>
        <taxon>Rickettsieae</taxon>
        <taxon>Rickettsia</taxon>
        <taxon>spotted fever group</taxon>
    </lineage>
</organism>
<comment type="function">
    <text evidence="1">This protein is one of the early assembly proteins of the 50S ribosomal subunit, although it is not seen to bind rRNA by itself. It is important during the early stages of 50S assembly.</text>
</comment>
<comment type="subunit">
    <text evidence="1">Part of the 50S ribosomal subunit.</text>
</comment>
<comment type="similarity">
    <text evidence="1">Belongs to the universal ribosomal protein uL13 family.</text>
</comment>
<reference key="1">
    <citation type="journal article" date="2001" name="Science">
        <title>Mechanisms of evolution in Rickettsia conorii and R. prowazekii.</title>
        <authorList>
            <person name="Ogata H."/>
            <person name="Audic S."/>
            <person name="Renesto-Audiffren P."/>
            <person name="Fournier P.-E."/>
            <person name="Barbe V."/>
            <person name="Samson D."/>
            <person name="Roux V."/>
            <person name="Cossart P."/>
            <person name="Weissenbach J."/>
            <person name="Claverie J.-M."/>
            <person name="Raoult D."/>
        </authorList>
    </citation>
    <scope>NUCLEOTIDE SEQUENCE [LARGE SCALE GENOMIC DNA]</scope>
    <source>
        <strain>ATCC VR-613 / Malish 7</strain>
    </source>
</reference>
<gene>
    <name evidence="1" type="primary">rplM</name>
    <name type="ordered locus">RC0315</name>
</gene>
<dbReference type="EMBL" id="AE006914">
    <property type="protein sequence ID" value="AAL02853.1"/>
    <property type="molecule type" value="Genomic_DNA"/>
</dbReference>
<dbReference type="PIR" id="C97739">
    <property type="entry name" value="C97739"/>
</dbReference>
<dbReference type="RefSeq" id="WP_004996373.1">
    <property type="nucleotide sequence ID" value="NC_003103.1"/>
</dbReference>
<dbReference type="SMR" id="Q92IV5"/>
<dbReference type="GeneID" id="95361999"/>
<dbReference type="KEGG" id="rco:RC0315"/>
<dbReference type="HOGENOM" id="CLU_082184_2_0_5"/>
<dbReference type="Proteomes" id="UP000000816">
    <property type="component" value="Chromosome"/>
</dbReference>
<dbReference type="GO" id="GO:0022625">
    <property type="term" value="C:cytosolic large ribosomal subunit"/>
    <property type="evidence" value="ECO:0007669"/>
    <property type="project" value="TreeGrafter"/>
</dbReference>
<dbReference type="GO" id="GO:0003729">
    <property type="term" value="F:mRNA binding"/>
    <property type="evidence" value="ECO:0007669"/>
    <property type="project" value="TreeGrafter"/>
</dbReference>
<dbReference type="GO" id="GO:0003735">
    <property type="term" value="F:structural constituent of ribosome"/>
    <property type="evidence" value="ECO:0007669"/>
    <property type="project" value="InterPro"/>
</dbReference>
<dbReference type="GO" id="GO:0017148">
    <property type="term" value="P:negative regulation of translation"/>
    <property type="evidence" value="ECO:0007669"/>
    <property type="project" value="TreeGrafter"/>
</dbReference>
<dbReference type="GO" id="GO:0006412">
    <property type="term" value="P:translation"/>
    <property type="evidence" value="ECO:0007669"/>
    <property type="project" value="UniProtKB-UniRule"/>
</dbReference>
<dbReference type="CDD" id="cd00392">
    <property type="entry name" value="Ribosomal_L13"/>
    <property type="match status" value="1"/>
</dbReference>
<dbReference type="Gene3D" id="3.90.1180.10">
    <property type="entry name" value="Ribosomal protein L13"/>
    <property type="match status" value="1"/>
</dbReference>
<dbReference type="HAMAP" id="MF_01366">
    <property type="entry name" value="Ribosomal_uL13"/>
    <property type="match status" value="1"/>
</dbReference>
<dbReference type="InterPro" id="IPR005822">
    <property type="entry name" value="Ribosomal_uL13"/>
</dbReference>
<dbReference type="InterPro" id="IPR005823">
    <property type="entry name" value="Ribosomal_uL13_bac-type"/>
</dbReference>
<dbReference type="InterPro" id="IPR023563">
    <property type="entry name" value="Ribosomal_uL13_CS"/>
</dbReference>
<dbReference type="InterPro" id="IPR036899">
    <property type="entry name" value="Ribosomal_uL13_sf"/>
</dbReference>
<dbReference type="NCBIfam" id="TIGR01066">
    <property type="entry name" value="rplM_bact"/>
    <property type="match status" value="1"/>
</dbReference>
<dbReference type="PANTHER" id="PTHR11545:SF2">
    <property type="entry name" value="LARGE RIBOSOMAL SUBUNIT PROTEIN UL13M"/>
    <property type="match status" value="1"/>
</dbReference>
<dbReference type="PANTHER" id="PTHR11545">
    <property type="entry name" value="RIBOSOMAL PROTEIN L13"/>
    <property type="match status" value="1"/>
</dbReference>
<dbReference type="Pfam" id="PF00572">
    <property type="entry name" value="Ribosomal_L13"/>
    <property type="match status" value="1"/>
</dbReference>
<dbReference type="PIRSF" id="PIRSF002181">
    <property type="entry name" value="Ribosomal_L13"/>
    <property type="match status" value="1"/>
</dbReference>
<dbReference type="SUPFAM" id="SSF52161">
    <property type="entry name" value="Ribosomal protein L13"/>
    <property type="match status" value="1"/>
</dbReference>
<dbReference type="PROSITE" id="PS00783">
    <property type="entry name" value="RIBOSOMAL_L13"/>
    <property type="match status" value="1"/>
</dbReference>
<name>RL13_RICCN</name>
<protein>
    <recommendedName>
        <fullName evidence="1">Large ribosomal subunit protein uL13</fullName>
    </recommendedName>
    <alternativeName>
        <fullName evidence="2">50S ribosomal protein L13</fullName>
    </alternativeName>
</protein>
<proteinExistence type="inferred from homology"/>
<evidence type="ECO:0000255" key="1">
    <source>
        <dbReference type="HAMAP-Rule" id="MF_01366"/>
    </source>
</evidence>
<evidence type="ECO:0000305" key="2"/>
<accession>Q92IV5</accession>
<feature type="chain" id="PRO_0000272381" description="Large ribosomal subunit protein uL13">
    <location>
        <begin position="1"/>
        <end position="155"/>
    </location>
</feature>